<sequence length="701" mass="77161">MAQKDVLTDLTKVRNIGIMAHIDAGKTTTTERILYYTGISYKIGEVHDGAATMDWMEQEQERGITITSAATTCFWNDNQINIIDTPGHVDFTVEVERSLRVLDGAVAVFDGKEGVEPQSEQVWRQADKYEVPRICFVNKMDKIGADFYFSVRTMQERLGANVIPIQLPVGSEGDFEGVVDLVEMKAKVWSTEAKLGEKYDVVGIPTDLQEKAEEYRTNLLETVAETDEALLEKYFSGEELTVAEIKGAIRKLTISSEAYPVLCGSAFKNKGVQPMLDAVIDYLPSPLDVPAAIGHVPGKEDEEIVRKPSTDEPLSALAFKVATHPFFGKLTYVRVYSGKVDSGSQVINATKGKKERLGKLFQMHSNKENPVETASAGHIYAVIGLKDTTTGDTLADPNNQIVLESMTFPDPVIEVAIEPKTKSDQEKLSLSIQKLAEEDPTFKVHLDSETGQTVIGGMGELHLDILVDRMRREFKVEANVGKPQVAYKETIRRVVETVEYTHKKQTGGSGQFAKVIIKLEPFSGENGATYEFENKVTGGRIPREYIPSVEAGARDAMQYGVLAGYPLVNLKVTLLDGAYHDVDSSEIAFKIAGSQVLKKAAAQAQPVILEPIMAVEVTTPEDYMGDVIGDLHSRRGQIQAMKERAGTRVVRAHVPLSEMFGYVGDLRSKTQGRANYSMVFNSYSEVPANVSKEIIAKATGE</sequence>
<gene>
    <name evidence="1" type="primary">fusA</name>
    <name type="ordered locus">MLBr01878</name>
</gene>
<feature type="chain" id="PRO_1000201477" description="Elongation factor G">
    <location>
        <begin position="1"/>
        <end position="701"/>
    </location>
</feature>
<feature type="domain" description="tr-type G">
    <location>
        <begin position="11"/>
        <end position="287"/>
    </location>
</feature>
<feature type="binding site" evidence="1">
    <location>
        <begin position="20"/>
        <end position="27"/>
    </location>
    <ligand>
        <name>GTP</name>
        <dbReference type="ChEBI" id="CHEBI:37565"/>
    </ligand>
</feature>
<feature type="binding site" evidence="1">
    <location>
        <begin position="84"/>
        <end position="88"/>
    </location>
    <ligand>
        <name>GTP</name>
        <dbReference type="ChEBI" id="CHEBI:37565"/>
    </ligand>
</feature>
<feature type="binding site" evidence="1">
    <location>
        <begin position="138"/>
        <end position="141"/>
    </location>
    <ligand>
        <name>GTP</name>
        <dbReference type="ChEBI" id="CHEBI:37565"/>
    </ligand>
</feature>
<dbReference type="EMBL" id="FM211192">
    <property type="protein sequence ID" value="CAR71974.1"/>
    <property type="molecule type" value="Genomic_DNA"/>
</dbReference>
<dbReference type="SMR" id="B8ZSC2"/>
<dbReference type="KEGG" id="mlb:MLBr01878"/>
<dbReference type="HOGENOM" id="CLU_002794_4_1_11"/>
<dbReference type="Proteomes" id="UP000006900">
    <property type="component" value="Chromosome"/>
</dbReference>
<dbReference type="GO" id="GO:0005737">
    <property type="term" value="C:cytoplasm"/>
    <property type="evidence" value="ECO:0007669"/>
    <property type="project" value="UniProtKB-SubCell"/>
</dbReference>
<dbReference type="GO" id="GO:0005525">
    <property type="term" value="F:GTP binding"/>
    <property type="evidence" value="ECO:0007669"/>
    <property type="project" value="UniProtKB-UniRule"/>
</dbReference>
<dbReference type="GO" id="GO:0003924">
    <property type="term" value="F:GTPase activity"/>
    <property type="evidence" value="ECO:0007669"/>
    <property type="project" value="InterPro"/>
</dbReference>
<dbReference type="GO" id="GO:0003746">
    <property type="term" value="F:translation elongation factor activity"/>
    <property type="evidence" value="ECO:0007669"/>
    <property type="project" value="UniProtKB-UniRule"/>
</dbReference>
<dbReference type="GO" id="GO:0032790">
    <property type="term" value="P:ribosome disassembly"/>
    <property type="evidence" value="ECO:0007669"/>
    <property type="project" value="TreeGrafter"/>
</dbReference>
<dbReference type="CDD" id="cd01886">
    <property type="entry name" value="EF-G"/>
    <property type="match status" value="1"/>
</dbReference>
<dbReference type="CDD" id="cd16262">
    <property type="entry name" value="EFG_III"/>
    <property type="match status" value="1"/>
</dbReference>
<dbReference type="CDD" id="cd01434">
    <property type="entry name" value="EFG_mtEFG1_IV"/>
    <property type="match status" value="1"/>
</dbReference>
<dbReference type="CDD" id="cd03713">
    <property type="entry name" value="EFG_mtEFG_C"/>
    <property type="match status" value="1"/>
</dbReference>
<dbReference type="CDD" id="cd04088">
    <property type="entry name" value="EFG_mtEFG_II"/>
    <property type="match status" value="1"/>
</dbReference>
<dbReference type="FunFam" id="2.40.30.10:FF:000006">
    <property type="entry name" value="Elongation factor G"/>
    <property type="match status" value="1"/>
</dbReference>
<dbReference type="FunFam" id="3.30.230.10:FF:000003">
    <property type="entry name" value="Elongation factor G"/>
    <property type="match status" value="1"/>
</dbReference>
<dbReference type="FunFam" id="3.30.70.240:FF:000001">
    <property type="entry name" value="Elongation factor G"/>
    <property type="match status" value="1"/>
</dbReference>
<dbReference type="FunFam" id="3.30.70.870:FF:000001">
    <property type="entry name" value="Elongation factor G"/>
    <property type="match status" value="1"/>
</dbReference>
<dbReference type="FunFam" id="3.40.50.300:FF:000029">
    <property type="entry name" value="Elongation factor G"/>
    <property type="match status" value="1"/>
</dbReference>
<dbReference type="Gene3D" id="3.30.230.10">
    <property type="match status" value="1"/>
</dbReference>
<dbReference type="Gene3D" id="3.30.70.240">
    <property type="match status" value="1"/>
</dbReference>
<dbReference type="Gene3D" id="3.30.70.870">
    <property type="entry name" value="Elongation Factor G (Translational Gtpase), domain 3"/>
    <property type="match status" value="1"/>
</dbReference>
<dbReference type="Gene3D" id="3.40.50.300">
    <property type="entry name" value="P-loop containing nucleotide triphosphate hydrolases"/>
    <property type="match status" value="1"/>
</dbReference>
<dbReference type="Gene3D" id="2.40.30.10">
    <property type="entry name" value="Translation factors"/>
    <property type="match status" value="1"/>
</dbReference>
<dbReference type="HAMAP" id="MF_00054_B">
    <property type="entry name" value="EF_G_EF_2_B"/>
    <property type="match status" value="1"/>
</dbReference>
<dbReference type="InterPro" id="IPR041095">
    <property type="entry name" value="EFG_II"/>
</dbReference>
<dbReference type="InterPro" id="IPR009022">
    <property type="entry name" value="EFG_III"/>
</dbReference>
<dbReference type="InterPro" id="IPR035647">
    <property type="entry name" value="EFG_III/V"/>
</dbReference>
<dbReference type="InterPro" id="IPR047872">
    <property type="entry name" value="EFG_IV"/>
</dbReference>
<dbReference type="InterPro" id="IPR035649">
    <property type="entry name" value="EFG_V"/>
</dbReference>
<dbReference type="InterPro" id="IPR000640">
    <property type="entry name" value="EFG_V-like"/>
</dbReference>
<dbReference type="InterPro" id="IPR004161">
    <property type="entry name" value="EFTu-like_2"/>
</dbReference>
<dbReference type="InterPro" id="IPR031157">
    <property type="entry name" value="G_TR_CS"/>
</dbReference>
<dbReference type="InterPro" id="IPR027417">
    <property type="entry name" value="P-loop_NTPase"/>
</dbReference>
<dbReference type="InterPro" id="IPR020568">
    <property type="entry name" value="Ribosomal_Su5_D2-typ_SF"/>
</dbReference>
<dbReference type="InterPro" id="IPR014721">
    <property type="entry name" value="Ribsml_uS5_D2-typ_fold_subgr"/>
</dbReference>
<dbReference type="InterPro" id="IPR005225">
    <property type="entry name" value="Small_GTP-bd"/>
</dbReference>
<dbReference type="InterPro" id="IPR000795">
    <property type="entry name" value="T_Tr_GTP-bd_dom"/>
</dbReference>
<dbReference type="InterPro" id="IPR009000">
    <property type="entry name" value="Transl_B-barrel_sf"/>
</dbReference>
<dbReference type="InterPro" id="IPR004540">
    <property type="entry name" value="Transl_elong_EFG/EF2"/>
</dbReference>
<dbReference type="InterPro" id="IPR005517">
    <property type="entry name" value="Transl_elong_EFG/EF2_IV"/>
</dbReference>
<dbReference type="NCBIfam" id="TIGR00484">
    <property type="entry name" value="EF-G"/>
    <property type="match status" value="1"/>
</dbReference>
<dbReference type="NCBIfam" id="NF009381">
    <property type="entry name" value="PRK12740.1-5"/>
    <property type="match status" value="1"/>
</dbReference>
<dbReference type="NCBIfam" id="TIGR00231">
    <property type="entry name" value="small_GTP"/>
    <property type="match status" value="1"/>
</dbReference>
<dbReference type="PANTHER" id="PTHR43261:SF1">
    <property type="entry name" value="RIBOSOME-RELEASING FACTOR 2, MITOCHONDRIAL"/>
    <property type="match status" value="1"/>
</dbReference>
<dbReference type="PANTHER" id="PTHR43261">
    <property type="entry name" value="TRANSLATION ELONGATION FACTOR G-RELATED"/>
    <property type="match status" value="1"/>
</dbReference>
<dbReference type="Pfam" id="PF00679">
    <property type="entry name" value="EFG_C"/>
    <property type="match status" value="1"/>
</dbReference>
<dbReference type="Pfam" id="PF14492">
    <property type="entry name" value="EFG_III"/>
    <property type="match status" value="1"/>
</dbReference>
<dbReference type="Pfam" id="PF03764">
    <property type="entry name" value="EFG_IV"/>
    <property type="match status" value="1"/>
</dbReference>
<dbReference type="Pfam" id="PF00009">
    <property type="entry name" value="GTP_EFTU"/>
    <property type="match status" value="1"/>
</dbReference>
<dbReference type="Pfam" id="PF03144">
    <property type="entry name" value="GTP_EFTU_D2"/>
    <property type="match status" value="1"/>
</dbReference>
<dbReference type="PRINTS" id="PR00315">
    <property type="entry name" value="ELONGATNFCT"/>
</dbReference>
<dbReference type="SMART" id="SM00838">
    <property type="entry name" value="EFG_C"/>
    <property type="match status" value="1"/>
</dbReference>
<dbReference type="SMART" id="SM00889">
    <property type="entry name" value="EFG_IV"/>
    <property type="match status" value="1"/>
</dbReference>
<dbReference type="SUPFAM" id="SSF54980">
    <property type="entry name" value="EF-G C-terminal domain-like"/>
    <property type="match status" value="2"/>
</dbReference>
<dbReference type="SUPFAM" id="SSF52540">
    <property type="entry name" value="P-loop containing nucleoside triphosphate hydrolases"/>
    <property type="match status" value="1"/>
</dbReference>
<dbReference type="SUPFAM" id="SSF54211">
    <property type="entry name" value="Ribosomal protein S5 domain 2-like"/>
    <property type="match status" value="1"/>
</dbReference>
<dbReference type="SUPFAM" id="SSF50447">
    <property type="entry name" value="Translation proteins"/>
    <property type="match status" value="1"/>
</dbReference>
<dbReference type="PROSITE" id="PS00301">
    <property type="entry name" value="G_TR_1"/>
    <property type="match status" value="1"/>
</dbReference>
<dbReference type="PROSITE" id="PS51722">
    <property type="entry name" value="G_TR_2"/>
    <property type="match status" value="1"/>
</dbReference>
<organism>
    <name type="scientific">Mycobacterium leprae (strain Br4923)</name>
    <dbReference type="NCBI Taxonomy" id="561304"/>
    <lineage>
        <taxon>Bacteria</taxon>
        <taxon>Bacillati</taxon>
        <taxon>Actinomycetota</taxon>
        <taxon>Actinomycetes</taxon>
        <taxon>Mycobacteriales</taxon>
        <taxon>Mycobacteriaceae</taxon>
        <taxon>Mycobacterium</taxon>
    </lineage>
</organism>
<name>EFG_MYCLB</name>
<proteinExistence type="inferred from homology"/>
<reference key="1">
    <citation type="journal article" date="2009" name="Nat. Genet.">
        <title>Comparative genomic and phylogeographic analysis of Mycobacterium leprae.</title>
        <authorList>
            <person name="Monot M."/>
            <person name="Honore N."/>
            <person name="Garnier T."/>
            <person name="Zidane N."/>
            <person name="Sherafi D."/>
            <person name="Paniz-Mondolfi A."/>
            <person name="Matsuoka M."/>
            <person name="Taylor G.M."/>
            <person name="Donoghue H.D."/>
            <person name="Bouwman A."/>
            <person name="Mays S."/>
            <person name="Watson C."/>
            <person name="Lockwood D."/>
            <person name="Khamispour A."/>
            <person name="Dowlati Y."/>
            <person name="Jianping S."/>
            <person name="Rea T.H."/>
            <person name="Vera-Cabrera L."/>
            <person name="Stefani M.M."/>
            <person name="Banu S."/>
            <person name="Macdonald M."/>
            <person name="Sapkota B.R."/>
            <person name="Spencer J.S."/>
            <person name="Thomas J."/>
            <person name="Harshman K."/>
            <person name="Singh P."/>
            <person name="Busso P."/>
            <person name="Gattiker A."/>
            <person name="Rougemont J."/>
            <person name="Brennan P.J."/>
            <person name="Cole S.T."/>
        </authorList>
    </citation>
    <scope>NUCLEOTIDE SEQUENCE [LARGE SCALE GENOMIC DNA]</scope>
    <source>
        <strain>Br4923</strain>
    </source>
</reference>
<accession>B8ZSC2</accession>
<evidence type="ECO:0000255" key="1">
    <source>
        <dbReference type="HAMAP-Rule" id="MF_00054"/>
    </source>
</evidence>
<protein>
    <recommendedName>
        <fullName evidence="1">Elongation factor G</fullName>
        <shortName evidence="1">EF-G</shortName>
    </recommendedName>
</protein>
<keyword id="KW-0963">Cytoplasm</keyword>
<keyword id="KW-0251">Elongation factor</keyword>
<keyword id="KW-0342">GTP-binding</keyword>
<keyword id="KW-0547">Nucleotide-binding</keyword>
<keyword id="KW-0648">Protein biosynthesis</keyword>
<comment type="function">
    <text evidence="1">Catalyzes the GTP-dependent ribosomal translocation step during translation elongation. During this step, the ribosome changes from the pre-translocational (PRE) to the post-translocational (POST) state as the newly formed A-site-bound peptidyl-tRNA and P-site-bound deacylated tRNA move to the P and E sites, respectively. Catalyzes the coordinated movement of the two tRNA molecules, the mRNA and conformational changes in the ribosome.</text>
</comment>
<comment type="subcellular location">
    <subcellularLocation>
        <location evidence="1">Cytoplasm</location>
    </subcellularLocation>
</comment>
<comment type="similarity">
    <text evidence="1">Belongs to the TRAFAC class translation factor GTPase superfamily. Classic translation factor GTPase family. EF-G/EF-2 subfamily.</text>
</comment>